<keyword id="KW-0028">Amino-acid biosynthesis</keyword>
<keyword id="KW-0963">Cytoplasm</keyword>
<keyword id="KW-0521">NADP</keyword>
<keyword id="KW-0560">Oxidoreductase</keyword>
<keyword id="KW-0641">Proline biosynthesis</keyword>
<keyword id="KW-1185">Reference proteome</keyword>
<evidence type="ECO:0000255" key="1">
    <source>
        <dbReference type="HAMAP-Rule" id="MF_00412"/>
    </source>
</evidence>
<evidence type="ECO:0000305" key="2"/>
<sequence length="445" mass="47792">MHGSPPAQALNQAVPDPSPELLARASSLRRHAIDLAQCSDQQRQEALRAMADALEQQREAILLANQDDLQAAEQEQLAPALLSRLKLDRTKLDGAIAGIRQLAQLPDPLAQRQLHRALDEGLVLERISVPLGVVGVIFEARPDAVMQIAALAIRSGNGAILKGGREANRSCSAILAALQQGLARSAVHPDVLTLLTSREESLALLKLDGLVDLIIPRGSNALVQFIQDNTRIPVLGHADGICHLYVDRQVDLDQAVAVAVDSKAQYPAACNAIETLLLHKEIAPAFLAAALPAFAQAGVELRGDGAAMALGVSQSASDDDWATEYLDLVLSIRVVDSMDEALEHIARYSSRHTEVICTTNTETAERFLARVDSAGVYQNCSSRFADGFRYGFGAEVGISTQTLPPRGPVGLEGLVTYRYRLRGDGHIAADYASGARQFTHQNLPL</sequence>
<proteinExistence type="inferred from homology"/>
<comment type="function">
    <text evidence="1">Catalyzes the NADPH-dependent reduction of L-glutamate 5-phosphate into L-glutamate 5-semialdehyde and phosphate. The product spontaneously undergoes cyclization to form 1-pyrroline-5-carboxylate.</text>
</comment>
<comment type="catalytic activity">
    <reaction evidence="1">
        <text>L-glutamate 5-semialdehyde + phosphate + NADP(+) = L-glutamyl 5-phosphate + NADPH + H(+)</text>
        <dbReference type="Rhea" id="RHEA:19541"/>
        <dbReference type="ChEBI" id="CHEBI:15378"/>
        <dbReference type="ChEBI" id="CHEBI:43474"/>
        <dbReference type="ChEBI" id="CHEBI:57783"/>
        <dbReference type="ChEBI" id="CHEBI:58066"/>
        <dbReference type="ChEBI" id="CHEBI:58274"/>
        <dbReference type="ChEBI" id="CHEBI:58349"/>
        <dbReference type="EC" id="1.2.1.41"/>
    </reaction>
</comment>
<comment type="pathway">
    <text evidence="1">Amino-acid biosynthesis; L-proline biosynthesis; L-glutamate 5-semialdehyde from L-glutamate: step 2/2.</text>
</comment>
<comment type="subcellular location">
    <subcellularLocation>
        <location evidence="1">Cytoplasm</location>
    </subcellularLocation>
</comment>
<comment type="similarity">
    <text evidence="1">Belongs to the gamma-glutamyl phosphate reductase family.</text>
</comment>
<comment type="sequence caution" evidence="2">
    <conflict type="erroneous initiation">
        <sequence resource="EMBL-CDS" id="CAK27829"/>
    </conflict>
</comment>
<gene>
    <name evidence="1" type="primary">proA</name>
    <name type="ordered locus">SynRCC307_0926</name>
</gene>
<reference key="1">
    <citation type="submission" date="2006-05" db="EMBL/GenBank/DDBJ databases">
        <authorList>
            <consortium name="Genoscope"/>
        </authorList>
    </citation>
    <scope>NUCLEOTIDE SEQUENCE [LARGE SCALE GENOMIC DNA]</scope>
    <source>
        <strain>RCC307</strain>
    </source>
</reference>
<name>PROA_SYNR3</name>
<protein>
    <recommendedName>
        <fullName evidence="1">Gamma-glutamyl phosphate reductase</fullName>
        <shortName evidence="1">GPR</shortName>
        <ecNumber evidence="1">1.2.1.41</ecNumber>
    </recommendedName>
    <alternativeName>
        <fullName evidence="1">Glutamate-5-semialdehyde dehydrogenase</fullName>
    </alternativeName>
    <alternativeName>
        <fullName evidence="1">Glutamyl-gamma-semialdehyde dehydrogenase</fullName>
        <shortName evidence="1">GSA dehydrogenase</shortName>
    </alternativeName>
</protein>
<dbReference type="EC" id="1.2.1.41" evidence="1"/>
<dbReference type="EMBL" id="CT978603">
    <property type="protein sequence ID" value="CAK27829.1"/>
    <property type="status" value="ALT_INIT"/>
    <property type="molecule type" value="Genomic_DNA"/>
</dbReference>
<dbReference type="SMR" id="A5GSH0"/>
<dbReference type="STRING" id="316278.SynRCC307_0926"/>
<dbReference type="KEGG" id="syr:SynRCC307_0926"/>
<dbReference type="eggNOG" id="COG0014">
    <property type="taxonomic scope" value="Bacteria"/>
</dbReference>
<dbReference type="HOGENOM" id="CLU_030231_0_1_3"/>
<dbReference type="UniPathway" id="UPA00098">
    <property type="reaction ID" value="UER00360"/>
</dbReference>
<dbReference type="Proteomes" id="UP000001115">
    <property type="component" value="Chromosome"/>
</dbReference>
<dbReference type="GO" id="GO:0005737">
    <property type="term" value="C:cytoplasm"/>
    <property type="evidence" value="ECO:0007669"/>
    <property type="project" value="UniProtKB-SubCell"/>
</dbReference>
<dbReference type="GO" id="GO:0004350">
    <property type="term" value="F:glutamate-5-semialdehyde dehydrogenase activity"/>
    <property type="evidence" value="ECO:0007669"/>
    <property type="project" value="UniProtKB-UniRule"/>
</dbReference>
<dbReference type="GO" id="GO:0050661">
    <property type="term" value="F:NADP binding"/>
    <property type="evidence" value="ECO:0007669"/>
    <property type="project" value="InterPro"/>
</dbReference>
<dbReference type="GO" id="GO:0055129">
    <property type="term" value="P:L-proline biosynthetic process"/>
    <property type="evidence" value="ECO:0007669"/>
    <property type="project" value="UniProtKB-UniRule"/>
</dbReference>
<dbReference type="CDD" id="cd07079">
    <property type="entry name" value="ALDH_F18-19_ProA-GPR"/>
    <property type="match status" value="1"/>
</dbReference>
<dbReference type="FunFam" id="3.40.309.10:FF:000006">
    <property type="entry name" value="Gamma-glutamyl phosphate reductase"/>
    <property type="match status" value="1"/>
</dbReference>
<dbReference type="Gene3D" id="3.40.605.10">
    <property type="entry name" value="Aldehyde Dehydrogenase, Chain A, domain 1"/>
    <property type="match status" value="1"/>
</dbReference>
<dbReference type="Gene3D" id="3.40.309.10">
    <property type="entry name" value="Aldehyde Dehydrogenase, Chain A, domain 2"/>
    <property type="match status" value="1"/>
</dbReference>
<dbReference type="HAMAP" id="MF_00412">
    <property type="entry name" value="ProA"/>
    <property type="match status" value="1"/>
</dbReference>
<dbReference type="InterPro" id="IPR016161">
    <property type="entry name" value="Ald_DH/histidinol_DH"/>
</dbReference>
<dbReference type="InterPro" id="IPR016163">
    <property type="entry name" value="Ald_DH_C"/>
</dbReference>
<dbReference type="InterPro" id="IPR016162">
    <property type="entry name" value="Ald_DH_N"/>
</dbReference>
<dbReference type="InterPro" id="IPR015590">
    <property type="entry name" value="Aldehyde_DH_dom"/>
</dbReference>
<dbReference type="InterPro" id="IPR020593">
    <property type="entry name" value="G-glutamylP_reductase_CS"/>
</dbReference>
<dbReference type="InterPro" id="IPR012134">
    <property type="entry name" value="Glu-5-SA_DH"/>
</dbReference>
<dbReference type="InterPro" id="IPR000965">
    <property type="entry name" value="GPR_dom"/>
</dbReference>
<dbReference type="NCBIfam" id="NF001221">
    <property type="entry name" value="PRK00197.1"/>
    <property type="match status" value="1"/>
</dbReference>
<dbReference type="NCBIfam" id="TIGR00407">
    <property type="entry name" value="proA"/>
    <property type="match status" value="1"/>
</dbReference>
<dbReference type="PANTHER" id="PTHR11063:SF8">
    <property type="entry name" value="DELTA-1-PYRROLINE-5-CARBOXYLATE SYNTHASE"/>
    <property type="match status" value="1"/>
</dbReference>
<dbReference type="PANTHER" id="PTHR11063">
    <property type="entry name" value="GLUTAMATE SEMIALDEHYDE DEHYDROGENASE"/>
    <property type="match status" value="1"/>
</dbReference>
<dbReference type="Pfam" id="PF00171">
    <property type="entry name" value="Aldedh"/>
    <property type="match status" value="1"/>
</dbReference>
<dbReference type="PIRSF" id="PIRSF000151">
    <property type="entry name" value="GPR"/>
    <property type="match status" value="1"/>
</dbReference>
<dbReference type="SUPFAM" id="SSF53720">
    <property type="entry name" value="ALDH-like"/>
    <property type="match status" value="1"/>
</dbReference>
<dbReference type="PROSITE" id="PS01223">
    <property type="entry name" value="PROA"/>
    <property type="match status" value="1"/>
</dbReference>
<accession>A5GSH0</accession>
<feature type="chain" id="PRO_0000340923" description="Gamma-glutamyl phosphate reductase">
    <location>
        <begin position="1"/>
        <end position="445"/>
    </location>
</feature>
<organism>
    <name type="scientific">Synechococcus sp. (strain RCC307)</name>
    <dbReference type="NCBI Taxonomy" id="316278"/>
    <lineage>
        <taxon>Bacteria</taxon>
        <taxon>Bacillati</taxon>
        <taxon>Cyanobacteriota</taxon>
        <taxon>Cyanophyceae</taxon>
        <taxon>Synechococcales</taxon>
        <taxon>Synechococcaceae</taxon>
        <taxon>Synechococcus</taxon>
    </lineage>
</organism>